<protein>
    <recommendedName>
        <fullName evidence="3">Kappa-buthitoxin-Tt2b</fullName>
        <shortName evidence="3">Kappa-BUTX-Tt2b</shortName>
    </recommendedName>
</protein>
<comment type="function">
    <text evidence="2">Blocks potassium channels Shaker-IR (with inactivation domain removed) and hKv1.2/KCNA2.</text>
</comment>
<comment type="subcellular location">
    <subcellularLocation>
        <location evidence="2">Secreted</location>
    </subcellularLocation>
</comment>
<comment type="tissue specificity">
    <text evidence="4">Expressed by the venom gland.</text>
</comment>
<comment type="domain">
    <text evidence="2">Has the structural arrangement of two alpha-helices stabilized by disulfide bonds (CSalpha/alpha 3(S-S)).</text>
</comment>
<comment type="mass spectrometry" mass="3179.75" method="MALDI" evidence="2"/>
<comment type="similarity">
    <text evidence="1">Belongs to the short scorpion toxin superfamily. Potassium channel inhibitor family. Alpha-KTx 20 subfamily.</text>
</comment>
<comment type="caution">
    <text evidence="4">The sequence aligns with alpha-KTx but has the CSalpha/alpha scaffold of a kappa-KTx due to the unusual pattern of disulfide bonds. As is the method of choice in UniProtKB, the assignment to the alpha-KTx 20 subfamily is based purely on the primary structure.</text>
</comment>
<organism>
    <name type="scientific">Tityus trivittatus</name>
    <name type="common">Argentinean scorpion</name>
    <dbReference type="NCBI Taxonomy" id="369776"/>
    <lineage>
        <taxon>Eukaryota</taxon>
        <taxon>Metazoa</taxon>
        <taxon>Ecdysozoa</taxon>
        <taxon>Arthropoda</taxon>
        <taxon>Chelicerata</taxon>
        <taxon>Arachnida</taxon>
        <taxon>Scorpiones</taxon>
        <taxon>Buthida</taxon>
        <taxon>Buthoidea</taxon>
        <taxon>Buthidae</taxon>
        <taxon>Tityus</taxon>
    </lineage>
</organism>
<reference key="1">
    <citation type="journal article" date="2012" name="J. Biol. Chem.">
        <title>New tricks of an old pattern: structural versatility of scorpion toxins with common cysteine spacing.</title>
        <authorList>
            <person name="Saucedo A.L."/>
            <person name="Flores-Solis D."/>
            <person name="Rodriguez de la Vega R.C."/>
            <person name="Ramirez-Cordero B."/>
            <person name="Hernandez-Lopez R."/>
            <person name="Cano-Sanchez P."/>
            <person name="Noriega-Navarro R."/>
            <person name="Garcia-Valdes J."/>
            <person name="Coronas-Valderrama F."/>
            <person name="de Roodt A."/>
            <person name="Brieba L.G."/>
            <person name="Possani L.D."/>
            <person name="Del Rio-Portilla F."/>
        </authorList>
    </citation>
    <scope>PROTEIN SEQUENCE</scope>
    <scope>FUNCTION</scope>
    <scope>SUBCELLULAR LOCATION</scope>
    <scope>DOMAIN</scope>
    <scope>MASS SPECTROMETRY</scope>
    <scope>DISULFIDE BONDS</scope>
    <scope>STRUCTURE BY NMR</scope>
    <source>
        <tissue evidence="2">Venom</tissue>
    </source>
</reference>
<evidence type="ECO:0000255" key="1"/>
<evidence type="ECO:0000269" key="2">
    <source>
    </source>
</evidence>
<evidence type="ECO:0000303" key="3">
    <source>
    </source>
</evidence>
<evidence type="ECO:0000305" key="4"/>
<evidence type="ECO:0007829" key="5">
    <source>
        <dbReference type="PDB" id="2LI3"/>
    </source>
</evidence>
<sequence length="28" mass="3186">GCMPEYCAGQCRGKVSQDYCLKNCRCIR</sequence>
<accession>B3A0L5</accession>
<accession>H2L2L5</accession>
<feature type="peptide" id="PRO_0000417398" description="Kappa-buthitoxin-Tt2b" evidence="2">
    <location>
        <begin position="1"/>
        <end position="28"/>
    </location>
</feature>
<feature type="disulfide bond" evidence="2">
    <location>
        <begin position="2"/>
        <end position="24"/>
    </location>
</feature>
<feature type="disulfide bond" evidence="2">
    <location>
        <begin position="7"/>
        <end position="20"/>
    </location>
</feature>
<feature type="disulfide bond" evidence="2">
    <location>
        <begin position="11"/>
        <end position="26"/>
    </location>
</feature>
<feature type="helix" evidence="5">
    <location>
        <begin position="4"/>
        <end position="10"/>
    </location>
</feature>
<feature type="helix" evidence="5">
    <location>
        <begin position="15"/>
        <end position="23"/>
    </location>
</feature>
<dbReference type="PDB" id="2LI3">
    <property type="method" value="NMR"/>
    <property type="chains" value="A=1-28"/>
</dbReference>
<dbReference type="PDBsum" id="2LI3"/>
<dbReference type="BMRB" id="B3A0L5"/>
<dbReference type="SMR" id="B3A0L5"/>
<dbReference type="EvolutionaryTrace" id="B3A0L5"/>
<dbReference type="GO" id="GO:0005576">
    <property type="term" value="C:extracellular region"/>
    <property type="evidence" value="ECO:0007669"/>
    <property type="project" value="UniProtKB-SubCell"/>
</dbReference>
<dbReference type="GO" id="GO:0015459">
    <property type="term" value="F:potassium channel regulator activity"/>
    <property type="evidence" value="ECO:0007669"/>
    <property type="project" value="UniProtKB-KW"/>
</dbReference>
<dbReference type="GO" id="GO:0090729">
    <property type="term" value="F:toxin activity"/>
    <property type="evidence" value="ECO:0007669"/>
    <property type="project" value="UniProtKB-KW"/>
</dbReference>
<keyword id="KW-0002">3D-structure</keyword>
<keyword id="KW-0903">Direct protein sequencing</keyword>
<keyword id="KW-1015">Disulfide bond</keyword>
<keyword id="KW-0872">Ion channel impairing toxin</keyword>
<keyword id="KW-0528">Neurotoxin</keyword>
<keyword id="KW-0632">Potassium channel impairing toxin</keyword>
<keyword id="KW-0964">Secreted</keyword>
<keyword id="KW-0800">Toxin</keyword>
<name>KA20X_TITTR</name>
<proteinExistence type="evidence at protein level"/>